<name>YNCJ_ECO57</name>
<proteinExistence type="inferred from homology"/>
<evidence type="ECO:0000255" key="1"/>
<evidence type="ECO:0000305" key="2"/>
<feature type="signal peptide" evidence="1">
    <location>
        <begin position="1"/>
        <end position="22"/>
    </location>
</feature>
<feature type="chain" id="PRO_0000013843" description="Uncharacterized protein YncJ">
    <location>
        <begin position="23"/>
        <end position="76"/>
    </location>
</feature>
<gene>
    <name type="primary">yncJ</name>
    <name type="ordered locus">Z2283</name>
    <name type="ordered locus">ECs2040</name>
</gene>
<accession>P64460</accession>
<accession>P76105</accession>
<dbReference type="EMBL" id="AE005174">
    <property type="protein sequence ID" value="AAG56339.1"/>
    <property type="molecule type" value="Genomic_DNA"/>
</dbReference>
<dbReference type="EMBL" id="BA000007">
    <property type="protein sequence ID" value="BAB35463.2"/>
    <property type="status" value="ALT_INIT"/>
    <property type="molecule type" value="Genomic_DNA"/>
</dbReference>
<dbReference type="PIR" id="G85734">
    <property type="entry name" value="G85734"/>
</dbReference>
<dbReference type="PIR" id="H90883">
    <property type="entry name" value="H90883"/>
</dbReference>
<dbReference type="RefSeq" id="NP_310067.1">
    <property type="nucleotide sequence ID" value="NC_002695.1"/>
</dbReference>
<dbReference type="RefSeq" id="WP_000494244.1">
    <property type="nucleotide sequence ID" value="NZ_VOAI01000022.1"/>
</dbReference>
<dbReference type="SMR" id="P64460"/>
<dbReference type="STRING" id="155864.Z2283"/>
<dbReference type="GeneID" id="917238"/>
<dbReference type="KEGG" id="ece:Z2283"/>
<dbReference type="KEGG" id="ecs:ECs_2040"/>
<dbReference type="PATRIC" id="fig|386585.9.peg.2140"/>
<dbReference type="HOGENOM" id="CLU_198921_0_0_6"/>
<dbReference type="OMA" id="EHHRWQD"/>
<dbReference type="Proteomes" id="UP000000558">
    <property type="component" value="Chromosome"/>
</dbReference>
<dbReference type="Proteomes" id="UP000002519">
    <property type="component" value="Chromosome"/>
</dbReference>
<dbReference type="InterPro" id="IPR020117">
    <property type="entry name" value="Uncharacterised_YncJ"/>
</dbReference>
<dbReference type="Pfam" id="PF10829">
    <property type="entry name" value="DUF2554"/>
    <property type="match status" value="1"/>
</dbReference>
<organism>
    <name type="scientific">Escherichia coli O157:H7</name>
    <dbReference type="NCBI Taxonomy" id="83334"/>
    <lineage>
        <taxon>Bacteria</taxon>
        <taxon>Pseudomonadati</taxon>
        <taxon>Pseudomonadota</taxon>
        <taxon>Gammaproteobacteria</taxon>
        <taxon>Enterobacterales</taxon>
        <taxon>Enterobacteriaceae</taxon>
        <taxon>Escherichia</taxon>
    </lineage>
</organism>
<comment type="sequence caution" evidence="2">
    <conflict type="erroneous initiation">
        <sequence resource="EMBL-CDS" id="BAB35463"/>
    </conflict>
    <text>Truncated N-terminus.</text>
</comment>
<keyword id="KW-1185">Reference proteome</keyword>
<keyword id="KW-0732">Signal</keyword>
<sequence>MFTKALSVVLLTCALFSGQLMAGHKGHEFVWVKNVDHQLRHEADSDELRAVAEESAEGLREHFYWQKSRKPEAGQR</sequence>
<protein>
    <recommendedName>
        <fullName>Uncharacterized protein YncJ</fullName>
    </recommendedName>
</protein>
<reference key="1">
    <citation type="journal article" date="2001" name="Nature">
        <title>Genome sequence of enterohaemorrhagic Escherichia coli O157:H7.</title>
        <authorList>
            <person name="Perna N.T."/>
            <person name="Plunkett G. III"/>
            <person name="Burland V."/>
            <person name="Mau B."/>
            <person name="Glasner J.D."/>
            <person name="Rose D.J."/>
            <person name="Mayhew G.F."/>
            <person name="Evans P.S."/>
            <person name="Gregor J."/>
            <person name="Kirkpatrick H.A."/>
            <person name="Posfai G."/>
            <person name="Hackett J."/>
            <person name="Klink S."/>
            <person name="Boutin A."/>
            <person name="Shao Y."/>
            <person name="Miller L."/>
            <person name="Grotbeck E.J."/>
            <person name="Davis N.W."/>
            <person name="Lim A."/>
            <person name="Dimalanta E.T."/>
            <person name="Potamousis K."/>
            <person name="Apodaca J."/>
            <person name="Anantharaman T.S."/>
            <person name="Lin J."/>
            <person name="Yen G."/>
            <person name="Schwartz D.C."/>
            <person name="Welch R.A."/>
            <person name="Blattner F.R."/>
        </authorList>
    </citation>
    <scope>NUCLEOTIDE SEQUENCE [LARGE SCALE GENOMIC DNA]</scope>
    <source>
        <strain>O157:H7 / EDL933 / ATCC 700927 / EHEC</strain>
    </source>
</reference>
<reference key="2">
    <citation type="journal article" date="2001" name="DNA Res.">
        <title>Complete genome sequence of enterohemorrhagic Escherichia coli O157:H7 and genomic comparison with a laboratory strain K-12.</title>
        <authorList>
            <person name="Hayashi T."/>
            <person name="Makino K."/>
            <person name="Ohnishi M."/>
            <person name="Kurokawa K."/>
            <person name="Ishii K."/>
            <person name="Yokoyama K."/>
            <person name="Han C.-G."/>
            <person name="Ohtsubo E."/>
            <person name="Nakayama K."/>
            <person name="Murata T."/>
            <person name="Tanaka M."/>
            <person name="Tobe T."/>
            <person name="Iida T."/>
            <person name="Takami H."/>
            <person name="Honda T."/>
            <person name="Sasakawa C."/>
            <person name="Ogasawara N."/>
            <person name="Yasunaga T."/>
            <person name="Kuhara S."/>
            <person name="Shiba T."/>
            <person name="Hattori M."/>
            <person name="Shinagawa H."/>
        </authorList>
    </citation>
    <scope>NUCLEOTIDE SEQUENCE [LARGE SCALE GENOMIC DNA]</scope>
    <source>
        <strain>O157:H7 / Sakai / RIMD 0509952 / EHEC</strain>
    </source>
</reference>